<protein>
    <recommendedName>
        <fullName evidence="1">Lipoyl synthase</fullName>
        <ecNumber evidence="1">2.8.1.8</ecNumber>
    </recommendedName>
    <alternativeName>
        <fullName evidence="1">Lip-syn</fullName>
        <shortName evidence="1">LS</shortName>
    </alternativeName>
    <alternativeName>
        <fullName evidence="1">Lipoate synthase</fullName>
    </alternativeName>
    <alternativeName>
        <fullName evidence="1">Lipoic acid synthase</fullName>
    </alternativeName>
    <alternativeName>
        <fullName evidence="1">Sulfur insertion protein LipA</fullName>
    </alternativeName>
</protein>
<comment type="function">
    <text evidence="1">Catalyzes the radical-mediated insertion of two sulfur atoms into the C-6 and C-8 positions of the octanoyl moiety bound to the lipoyl domains of lipoate-dependent enzymes, thereby converting the octanoylated domains into lipoylated derivatives.</text>
</comment>
<comment type="catalytic activity">
    <reaction evidence="1">
        <text>[[Fe-S] cluster scaffold protein carrying a second [4Fe-4S](2+) cluster] + N(6)-octanoyl-L-lysyl-[protein] + 2 oxidized [2Fe-2S]-[ferredoxin] + 2 S-adenosyl-L-methionine + 4 H(+) = [[Fe-S] cluster scaffold protein] + N(6)-[(R)-dihydrolipoyl]-L-lysyl-[protein] + 4 Fe(3+) + 2 hydrogen sulfide + 2 5'-deoxyadenosine + 2 L-methionine + 2 reduced [2Fe-2S]-[ferredoxin]</text>
        <dbReference type="Rhea" id="RHEA:16585"/>
        <dbReference type="Rhea" id="RHEA-COMP:9928"/>
        <dbReference type="Rhea" id="RHEA-COMP:10000"/>
        <dbReference type="Rhea" id="RHEA-COMP:10001"/>
        <dbReference type="Rhea" id="RHEA-COMP:10475"/>
        <dbReference type="Rhea" id="RHEA-COMP:14568"/>
        <dbReference type="Rhea" id="RHEA-COMP:14569"/>
        <dbReference type="ChEBI" id="CHEBI:15378"/>
        <dbReference type="ChEBI" id="CHEBI:17319"/>
        <dbReference type="ChEBI" id="CHEBI:29034"/>
        <dbReference type="ChEBI" id="CHEBI:29919"/>
        <dbReference type="ChEBI" id="CHEBI:33722"/>
        <dbReference type="ChEBI" id="CHEBI:33737"/>
        <dbReference type="ChEBI" id="CHEBI:33738"/>
        <dbReference type="ChEBI" id="CHEBI:57844"/>
        <dbReference type="ChEBI" id="CHEBI:59789"/>
        <dbReference type="ChEBI" id="CHEBI:78809"/>
        <dbReference type="ChEBI" id="CHEBI:83100"/>
        <dbReference type="EC" id="2.8.1.8"/>
    </reaction>
</comment>
<comment type="cofactor">
    <cofactor evidence="1">
        <name>[4Fe-4S] cluster</name>
        <dbReference type="ChEBI" id="CHEBI:49883"/>
    </cofactor>
    <text evidence="1">Binds 2 [4Fe-4S] clusters per subunit. One cluster is coordinated with 3 cysteines and an exchangeable S-adenosyl-L-methionine.</text>
</comment>
<comment type="pathway">
    <text evidence="1">Protein modification; protein lipoylation via endogenous pathway; protein N(6)-(lipoyl)lysine from octanoyl-[acyl-carrier-protein]: step 2/2.</text>
</comment>
<comment type="subcellular location">
    <subcellularLocation>
        <location evidence="1">Cytoplasm</location>
    </subcellularLocation>
</comment>
<comment type="similarity">
    <text evidence="1">Belongs to the radical SAM superfamily. Lipoyl synthase family.</text>
</comment>
<feature type="chain" id="PRO_0000102385" description="Lipoyl synthase">
    <location>
        <begin position="1"/>
        <end position="373"/>
    </location>
</feature>
<feature type="domain" description="Radical SAM core" evidence="2">
    <location>
        <begin position="93"/>
        <end position="312"/>
    </location>
</feature>
<feature type="region of interest" description="Disordered" evidence="3">
    <location>
        <begin position="12"/>
        <end position="36"/>
    </location>
</feature>
<feature type="region of interest" description="Disordered" evidence="3">
    <location>
        <begin position="346"/>
        <end position="373"/>
    </location>
</feature>
<feature type="binding site" evidence="1">
    <location>
        <position position="81"/>
    </location>
    <ligand>
        <name>[4Fe-4S] cluster</name>
        <dbReference type="ChEBI" id="CHEBI:49883"/>
        <label>1</label>
    </ligand>
</feature>
<feature type="binding site" evidence="1">
    <location>
        <position position="86"/>
    </location>
    <ligand>
        <name>[4Fe-4S] cluster</name>
        <dbReference type="ChEBI" id="CHEBI:49883"/>
        <label>1</label>
    </ligand>
</feature>
<feature type="binding site" evidence="1">
    <location>
        <position position="92"/>
    </location>
    <ligand>
        <name>[4Fe-4S] cluster</name>
        <dbReference type="ChEBI" id="CHEBI:49883"/>
        <label>1</label>
    </ligand>
</feature>
<feature type="binding site" evidence="1">
    <location>
        <position position="107"/>
    </location>
    <ligand>
        <name>[4Fe-4S] cluster</name>
        <dbReference type="ChEBI" id="CHEBI:49883"/>
        <label>2</label>
        <note>4Fe-4S-S-AdoMet</note>
    </ligand>
</feature>
<feature type="binding site" evidence="1">
    <location>
        <position position="111"/>
    </location>
    <ligand>
        <name>[4Fe-4S] cluster</name>
        <dbReference type="ChEBI" id="CHEBI:49883"/>
        <label>2</label>
        <note>4Fe-4S-S-AdoMet</note>
    </ligand>
</feature>
<feature type="binding site" evidence="1">
    <location>
        <position position="114"/>
    </location>
    <ligand>
        <name>[4Fe-4S] cluster</name>
        <dbReference type="ChEBI" id="CHEBI:49883"/>
        <label>2</label>
        <note>4Fe-4S-S-AdoMet</note>
    </ligand>
</feature>
<feature type="binding site" evidence="1">
    <location>
        <position position="323"/>
    </location>
    <ligand>
        <name>[4Fe-4S] cluster</name>
        <dbReference type="ChEBI" id="CHEBI:49883"/>
        <label>1</label>
    </ligand>
</feature>
<gene>
    <name evidence="1" type="primary">lipA</name>
    <name type="ordered locus">XF_1269</name>
</gene>
<sequence length="373" mass="41158">MTQPIVRSIPLHVVSNDHPSSSPLQPGVKQSGEDKIGRSPVQFADVPVLRKPSWIRVRIPSGNAVQSLKAKLRENRLVTVCEEAACPNIHECFSHGTATFMILGEVCTRRCSFCDVAHGRPKPPDPEEPISLARTVAEMGLKYVVVTSVDRDDLRDGGAQHFVDCIAAIRQSAPQTRIEILTPDFRGKGRMDRALDILAACPPDVFNHNVETVPALYPNVRPGADYQWSLTLLKRFKAQHPQVPTKSGIMLGLGETLDQVQATLRDLRAHDVDMVTIGQYLQPTSHHHPVLRYWTPDEYKALEEYGMALGFSHVASGPMVRSSYHADHQAKEAGLGFNATVSLGSPAVSSTEHRERHTIASKSASKTESIRHR</sequence>
<name>LIPA_XYLFA</name>
<organism>
    <name type="scientific">Xylella fastidiosa (strain 9a5c)</name>
    <dbReference type="NCBI Taxonomy" id="160492"/>
    <lineage>
        <taxon>Bacteria</taxon>
        <taxon>Pseudomonadati</taxon>
        <taxon>Pseudomonadota</taxon>
        <taxon>Gammaproteobacteria</taxon>
        <taxon>Lysobacterales</taxon>
        <taxon>Lysobacteraceae</taxon>
        <taxon>Xylella</taxon>
    </lineage>
</organism>
<evidence type="ECO:0000255" key="1">
    <source>
        <dbReference type="HAMAP-Rule" id="MF_00206"/>
    </source>
</evidence>
<evidence type="ECO:0000255" key="2">
    <source>
        <dbReference type="PROSITE-ProRule" id="PRU01266"/>
    </source>
</evidence>
<evidence type="ECO:0000256" key="3">
    <source>
        <dbReference type="SAM" id="MobiDB-lite"/>
    </source>
</evidence>
<reference key="1">
    <citation type="journal article" date="2000" name="Nature">
        <title>The genome sequence of the plant pathogen Xylella fastidiosa.</title>
        <authorList>
            <person name="Simpson A.J.G."/>
            <person name="Reinach F.C."/>
            <person name="Arruda P."/>
            <person name="Abreu F.A."/>
            <person name="Acencio M."/>
            <person name="Alvarenga R."/>
            <person name="Alves L.M.C."/>
            <person name="Araya J.E."/>
            <person name="Baia G.S."/>
            <person name="Baptista C.S."/>
            <person name="Barros M.H."/>
            <person name="Bonaccorsi E.D."/>
            <person name="Bordin S."/>
            <person name="Bove J.M."/>
            <person name="Briones M.R.S."/>
            <person name="Bueno M.R.P."/>
            <person name="Camargo A.A."/>
            <person name="Camargo L.E.A."/>
            <person name="Carraro D.M."/>
            <person name="Carrer H."/>
            <person name="Colauto N.B."/>
            <person name="Colombo C."/>
            <person name="Costa F.F."/>
            <person name="Costa M.C.R."/>
            <person name="Costa-Neto C.M."/>
            <person name="Coutinho L.L."/>
            <person name="Cristofani M."/>
            <person name="Dias-Neto E."/>
            <person name="Docena C."/>
            <person name="El-Dorry H."/>
            <person name="Facincani A.P."/>
            <person name="Ferreira A.J.S."/>
            <person name="Ferreira V.C.A."/>
            <person name="Ferro J.A."/>
            <person name="Fraga J.S."/>
            <person name="Franca S.C."/>
            <person name="Franco M.C."/>
            <person name="Frohme M."/>
            <person name="Furlan L.R."/>
            <person name="Garnier M."/>
            <person name="Goldman G.H."/>
            <person name="Goldman M.H.S."/>
            <person name="Gomes S.L."/>
            <person name="Gruber A."/>
            <person name="Ho P.L."/>
            <person name="Hoheisel J.D."/>
            <person name="Junqueira M.L."/>
            <person name="Kemper E.L."/>
            <person name="Kitajima J.P."/>
            <person name="Krieger J.E."/>
            <person name="Kuramae E.E."/>
            <person name="Laigret F."/>
            <person name="Lambais M.R."/>
            <person name="Leite L.C.C."/>
            <person name="Lemos E.G.M."/>
            <person name="Lemos M.V.F."/>
            <person name="Lopes S.A."/>
            <person name="Lopes C.R."/>
            <person name="Machado J.A."/>
            <person name="Machado M.A."/>
            <person name="Madeira A.M.B.N."/>
            <person name="Madeira H.M.F."/>
            <person name="Marino C.L."/>
            <person name="Marques M.V."/>
            <person name="Martins E.A.L."/>
            <person name="Martins E.M.F."/>
            <person name="Matsukuma A.Y."/>
            <person name="Menck C.F.M."/>
            <person name="Miracca E.C."/>
            <person name="Miyaki C.Y."/>
            <person name="Monteiro-Vitorello C.B."/>
            <person name="Moon D.H."/>
            <person name="Nagai M.A."/>
            <person name="Nascimento A.L.T.O."/>
            <person name="Netto L.E.S."/>
            <person name="Nhani A. Jr."/>
            <person name="Nobrega F.G."/>
            <person name="Nunes L.R."/>
            <person name="Oliveira M.A."/>
            <person name="de Oliveira M.C."/>
            <person name="de Oliveira R.C."/>
            <person name="Palmieri D.A."/>
            <person name="Paris A."/>
            <person name="Peixoto B.R."/>
            <person name="Pereira G.A.G."/>
            <person name="Pereira H.A. Jr."/>
            <person name="Pesquero J.B."/>
            <person name="Quaggio R.B."/>
            <person name="Roberto P.G."/>
            <person name="Rodrigues V."/>
            <person name="de Rosa A.J.M."/>
            <person name="de Rosa V.E. Jr."/>
            <person name="de Sa R.G."/>
            <person name="Santelli R.V."/>
            <person name="Sawasaki H.E."/>
            <person name="da Silva A.C.R."/>
            <person name="da Silva A.M."/>
            <person name="da Silva F.R."/>
            <person name="Silva W.A. Jr."/>
            <person name="da Silveira J.F."/>
            <person name="Silvestri M.L.Z."/>
            <person name="Siqueira W.J."/>
            <person name="de Souza A.A."/>
            <person name="de Souza A.P."/>
            <person name="Terenzi M.F."/>
            <person name="Truffi D."/>
            <person name="Tsai S.M."/>
            <person name="Tsuhako M.H."/>
            <person name="Vallada H."/>
            <person name="Van Sluys M.A."/>
            <person name="Verjovski-Almeida S."/>
            <person name="Vettore A.L."/>
            <person name="Zago M.A."/>
            <person name="Zatz M."/>
            <person name="Meidanis J."/>
            <person name="Setubal J.C."/>
        </authorList>
    </citation>
    <scope>NUCLEOTIDE SEQUENCE [LARGE SCALE GENOMIC DNA]</scope>
    <source>
        <strain>9a5c</strain>
    </source>
</reference>
<proteinExistence type="inferred from homology"/>
<keyword id="KW-0004">4Fe-4S</keyword>
<keyword id="KW-0963">Cytoplasm</keyword>
<keyword id="KW-0408">Iron</keyword>
<keyword id="KW-0411">Iron-sulfur</keyword>
<keyword id="KW-0479">Metal-binding</keyword>
<keyword id="KW-0949">S-adenosyl-L-methionine</keyword>
<keyword id="KW-0808">Transferase</keyword>
<accession>Q9PDW0</accession>
<dbReference type="EC" id="2.8.1.8" evidence="1"/>
<dbReference type="EMBL" id="AE003849">
    <property type="protein sequence ID" value="AAF84078.1"/>
    <property type="molecule type" value="Genomic_DNA"/>
</dbReference>
<dbReference type="PIR" id="C82701">
    <property type="entry name" value="C82701"/>
</dbReference>
<dbReference type="RefSeq" id="WP_010893775.1">
    <property type="nucleotide sequence ID" value="NC_002488.3"/>
</dbReference>
<dbReference type="SMR" id="Q9PDW0"/>
<dbReference type="STRING" id="160492.XF_1269"/>
<dbReference type="KEGG" id="xfa:XF_1269"/>
<dbReference type="eggNOG" id="COG0320">
    <property type="taxonomic scope" value="Bacteria"/>
</dbReference>
<dbReference type="HOGENOM" id="CLU_033144_2_1_6"/>
<dbReference type="UniPathway" id="UPA00538">
    <property type="reaction ID" value="UER00593"/>
</dbReference>
<dbReference type="Proteomes" id="UP000000812">
    <property type="component" value="Chromosome"/>
</dbReference>
<dbReference type="GO" id="GO:0005737">
    <property type="term" value="C:cytoplasm"/>
    <property type="evidence" value="ECO:0007669"/>
    <property type="project" value="UniProtKB-SubCell"/>
</dbReference>
<dbReference type="GO" id="GO:0051539">
    <property type="term" value="F:4 iron, 4 sulfur cluster binding"/>
    <property type="evidence" value="ECO:0007669"/>
    <property type="project" value="UniProtKB-UniRule"/>
</dbReference>
<dbReference type="GO" id="GO:0016992">
    <property type="term" value="F:lipoate synthase activity"/>
    <property type="evidence" value="ECO:0007669"/>
    <property type="project" value="UniProtKB-UniRule"/>
</dbReference>
<dbReference type="GO" id="GO:0046872">
    <property type="term" value="F:metal ion binding"/>
    <property type="evidence" value="ECO:0007669"/>
    <property type="project" value="UniProtKB-KW"/>
</dbReference>
<dbReference type="CDD" id="cd01335">
    <property type="entry name" value="Radical_SAM"/>
    <property type="match status" value="1"/>
</dbReference>
<dbReference type="FunFam" id="3.20.20.70:FF:000023">
    <property type="entry name" value="Lipoyl synthase"/>
    <property type="match status" value="1"/>
</dbReference>
<dbReference type="Gene3D" id="3.20.20.70">
    <property type="entry name" value="Aldolase class I"/>
    <property type="match status" value="1"/>
</dbReference>
<dbReference type="HAMAP" id="MF_00206">
    <property type="entry name" value="Lipoyl_synth"/>
    <property type="match status" value="1"/>
</dbReference>
<dbReference type="InterPro" id="IPR013785">
    <property type="entry name" value="Aldolase_TIM"/>
</dbReference>
<dbReference type="InterPro" id="IPR006638">
    <property type="entry name" value="Elp3/MiaA/NifB-like_rSAM"/>
</dbReference>
<dbReference type="InterPro" id="IPR031691">
    <property type="entry name" value="LIAS_N"/>
</dbReference>
<dbReference type="InterPro" id="IPR003698">
    <property type="entry name" value="Lipoyl_synth"/>
</dbReference>
<dbReference type="InterPro" id="IPR007197">
    <property type="entry name" value="rSAM"/>
</dbReference>
<dbReference type="NCBIfam" id="TIGR00510">
    <property type="entry name" value="lipA"/>
    <property type="match status" value="1"/>
</dbReference>
<dbReference type="NCBIfam" id="NF004019">
    <property type="entry name" value="PRK05481.1"/>
    <property type="match status" value="1"/>
</dbReference>
<dbReference type="NCBIfam" id="NF009544">
    <property type="entry name" value="PRK12928.1"/>
    <property type="match status" value="1"/>
</dbReference>
<dbReference type="PANTHER" id="PTHR10949">
    <property type="entry name" value="LIPOYL SYNTHASE"/>
    <property type="match status" value="1"/>
</dbReference>
<dbReference type="PANTHER" id="PTHR10949:SF0">
    <property type="entry name" value="LIPOYL SYNTHASE, MITOCHONDRIAL"/>
    <property type="match status" value="1"/>
</dbReference>
<dbReference type="Pfam" id="PF16881">
    <property type="entry name" value="LIAS_N"/>
    <property type="match status" value="1"/>
</dbReference>
<dbReference type="Pfam" id="PF04055">
    <property type="entry name" value="Radical_SAM"/>
    <property type="match status" value="1"/>
</dbReference>
<dbReference type="PIRSF" id="PIRSF005963">
    <property type="entry name" value="Lipoyl_synth"/>
    <property type="match status" value="1"/>
</dbReference>
<dbReference type="SFLD" id="SFLDF00271">
    <property type="entry name" value="lipoyl_synthase"/>
    <property type="match status" value="1"/>
</dbReference>
<dbReference type="SFLD" id="SFLDS00029">
    <property type="entry name" value="Radical_SAM"/>
    <property type="match status" value="1"/>
</dbReference>
<dbReference type="SMART" id="SM00729">
    <property type="entry name" value="Elp3"/>
    <property type="match status" value="1"/>
</dbReference>
<dbReference type="SUPFAM" id="SSF102114">
    <property type="entry name" value="Radical SAM enzymes"/>
    <property type="match status" value="1"/>
</dbReference>
<dbReference type="PROSITE" id="PS51918">
    <property type="entry name" value="RADICAL_SAM"/>
    <property type="match status" value="1"/>
</dbReference>